<organism>
    <name type="scientific">Gnetum parvifolium</name>
    <name type="common">Small-leaved jointfir</name>
    <name type="synonym">Gnetum scandens var. parvifolium</name>
    <dbReference type="NCBI Taxonomy" id="33153"/>
    <lineage>
        <taxon>Eukaryota</taxon>
        <taxon>Viridiplantae</taxon>
        <taxon>Streptophyta</taxon>
        <taxon>Embryophyta</taxon>
        <taxon>Tracheophyta</taxon>
        <taxon>Spermatophyta</taxon>
        <taxon>Gnetopsida</taxon>
        <taxon>Gnetidae</taxon>
        <taxon>Gnetales</taxon>
        <taxon>Gnetaceae</taxon>
        <taxon>Gnetum</taxon>
    </lineage>
</organism>
<sequence length="34" mass="3749">MEVNILALIAIALFISVPTAFLIIIYVKTISENN</sequence>
<dbReference type="EMBL" id="AB295934">
    <property type="protein sequence ID" value="BAF64883.1"/>
    <property type="molecule type" value="Genomic_DNA"/>
</dbReference>
<dbReference type="EMBL" id="AP009569">
    <property type="protein sequence ID" value="BAH11300.1"/>
    <property type="molecule type" value="Genomic_DNA"/>
</dbReference>
<dbReference type="RefSeq" id="YP_002519789.1">
    <property type="nucleotide sequence ID" value="NC_011942.1"/>
</dbReference>
<dbReference type="SMR" id="A6BM38"/>
<dbReference type="GeneID" id="7368202"/>
<dbReference type="GO" id="GO:0009535">
    <property type="term" value="C:chloroplast thylakoid membrane"/>
    <property type="evidence" value="ECO:0007669"/>
    <property type="project" value="UniProtKB-SubCell"/>
</dbReference>
<dbReference type="GO" id="GO:0009523">
    <property type="term" value="C:photosystem II"/>
    <property type="evidence" value="ECO:0007669"/>
    <property type="project" value="UniProtKB-KW"/>
</dbReference>
<dbReference type="GO" id="GO:0019684">
    <property type="term" value="P:photosynthesis, light reaction"/>
    <property type="evidence" value="ECO:0007669"/>
    <property type="project" value="InterPro"/>
</dbReference>
<dbReference type="HAMAP" id="MF_00438">
    <property type="entry name" value="PSII_PsbM"/>
    <property type="match status" value="1"/>
</dbReference>
<dbReference type="InterPro" id="IPR007826">
    <property type="entry name" value="PSII_PsbM"/>
</dbReference>
<dbReference type="InterPro" id="IPR037269">
    <property type="entry name" value="PSII_PsbM_sf"/>
</dbReference>
<dbReference type="NCBIfam" id="TIGR03038">
    <property type="entry name" value="PS_II_psbM"/>
    <property type="match status" value="1"/>
</dbReference>
<dbReference type="PANTHER" id="PTHR35774">
    <property type="entry name" value="PHOTOSYSTEM II REACTION CENTER PROTEIN M"/>
    <property type="match status" value="1"/>
</dbReference>
<dbReference type="PANTHER" id="PTHR35774:SF1">
    <property type="entry name" value="PHOTOSYSTEM II REACTION CENTER PROTEIN M"/>
    <property type="match status" value="1"/>
</dbReference>
<dbReference type="Pfam" id="PF05151">
    <property type="entry name" value="PsbM"/>
    <property type="match status" value="1"/>
</dbReference>
<dbReference type="SUPFAM" id="SSF161033">
    <property type="entry name" value="Photosystem II reaction center protein M, PsbM"/>
    <property type="match status" value="1"/>
</dbReference>
<accession>A6BM38</accession>
<accession>B7ZIC0</accession>
<gene>
    <name evidence="1" type="primary">psbM</name>
</gene>
<name>PSBM_GNEPA</name>
<geneLocation type="chloroplast"/>
<proteinExistence type="inferred from homology"/>
<protein>
    <recommendedName>
        <fullName evidence="1">Photosystem II reaction center protein M</fullName>
        <shortName evidence="1">PSII-M</shortName>
    </recommendedName>
</protein>
<keyword id="KW-0150">Chloroplast</keyword>
<keyword id="KW-0472">Membrane</keyword>
<keyword id="KW-0602">Photosynthesis</keyword>
<keyword id="KW-0604">Photosystem II</keyword>
<keyword id="KW-0934">Plastid</keyword>
<keyword id="KW-0674">Reaction center</keyword>
<keyword id="KW-0793">Thylakoid</keyword>
<keyword id="KW-0812">Transmembrane</keyword>
<keyword id="KW-1133">Transmembrane helix</keyword>
<feature type="chain" id="PRO_0000325734" description="Photosystem II reaction center protein M">
    <location>
        <begin position="1"/>
        <end position="34"/>
    </location>
</feature>
<feature type="transmembrane region" description="Helical" evidence="1">
    <location>
        <begin position="5"/>
        <end position="25"/>
    </location>
</feature>
<reference key="1">
    <citation type="journal article" date="2007" name="Mol. Biol. Evol.">
        <title>Chloroplast genome (cpDNA) of Cycas taitungensis and 56 cp protein-coding genes of Gnetum parvifolium: insights into cpDNA evolution and phylogeny of extant seed plants.</title>
        <authorList>
            <person name="Wu C.-S."/>
            <person name="Wang Y.-N."/>
            <person name="Liu S.-M."/>
            <person name="Chaw S.-M."/>
        </authorList>
    </citation>
    <scope>NUCLEOTIDE SEQUENCE [LARGE SCALE GENOMIC DNA]</scope>
</reference>
<reference key="2">
    <citation type="journal article" date="2009" name="Mol. Phylogenet. Evol.">
        <title>Evolution of reduced and compact chloroplast genomes (cpDNAs) in gnetophytes: Selection toward a lower-cost strategy.</title>
        <authorList>
            <person name="Wu C.-S."/>
            <person name="Lai Y.-T."/>
            <person name="Lin C.-P."/>
            <person name="Wang Y.-N."/>
            <person name="Chaw S.-M."/>
        </authorList>
    </citation>
    <scope>NUCLEOTIDE SEQUENCE [LARGE SCALE GENOMIC DNA]</scope>
</reference>
<comment type="function">
    <text evidence="1">One of the components of the core complex of photosystem II (PSII). PSII is a light-driven water:plastoquinone oxidoreductase that uses light energy to abstract electrons from H(2)O, generating O(2) and a proton gradient subsequently used for ATP formation. It consists of a core antenna complex that captures photons, and an electron transfer chain that converts photonic excitation into a charge separation. This subunit is found at the monomer-monomer interface.</text>
</comment>
<comment type="subunit">
    <text evidence="1">PSII is composed of 1 copy each of membrane proteins PsbA, PsbB, PsbC, PsbD, PsbE, PsbF, PsbH, PsbI, PsbJ, PsbK, PsbL, PsbM, PsbT, PsbX, PsbY, PsbZ, Psb30/Ycf12, at least 3 peripheral proteins of the oxygen-evolving complex and a large number of cofactors. It forms dimeric complexes.</text>
</comment>
<comment type="subcellular location">
    <subcellularLocation>
        <location evidence="1">Plastid</location>
        <location evidence="1">Chloroplast thylakoid membrane</location>
        <topology evidence="1">Single-pass membrane protein</topology>
    </subcellularLocation>
</comment>
<comment type="similarity">
    <text evidence="1">Belongs to the PsbM family.</text>
</comment>
<evidence type="ECO:0000255" key="1">
    <source>
        <dbReference type="HAMAP-Rule" id="MF_00438"/>
    </source>
</evidence>